<reference key="1">
    <citation type="journal article" date="2006" name="Proc. Natl. Acad. Sci. U.S.A.">
        <title>Comparative genomics of the lactic acid bacteria.</title>
        <authorList>
            <person name="Makarova K.S."/>
            <person name="Slesarev A."/>
            <person name="Wolf Y.I."/>
            <person name="Sorokin A."/>
            <person name="Mirkin B."/>
            <person name="Koonin E.V."/>
            <person name="Pavlov A."/>
            <person name="Pavlova N."/>
            <person name="Karamychev V."/>
            <person name="Polouchine N."/>
            <person name="Shakhova V."/>
            <person name="Grigoriev I."/>
            <person name="Lou Y."/>
            <person name="Rohksar D."/>
            <person name="Lucas S."/>
            <person name="Huang K."/>
            <person name="Goodstein D.M."/>
            <person name="Hawkins T."/>
            <person name="Plengvidhya V."/>
            <person name="Welker D."/>
            <person name="Hughes J."/>
            <person name="Goh Y."/>
            <person name="Benson A."/>
            <person name="Baldwin K."/>
            <person name="Lee J.-H."/>
            <person name="Diaz-Muniz I."/>
            <person name="Dosti B."/>
            <person name="Smeianov V."/>
            <person name="Wechter W."/>
            <person name="Barabote R."/>
            <person name="Lorca G."/>
            <person name="Altermann E."/>
            <person name="Barrangou R."/>
            <person name="Ganesan B."/>
            <person name="Xie Y."/>
            <person name="Rawsthorne H."/>
            <person name="Tamir D."/>
            <person name="Parker C."/>
            <person name="Breidt F."/>
            <person name="Broadbent J.R."/>
            <person name="Hutkins R."/>
            <person name="O'Sullivan D."/>
            <person name="Steele J."/>
            <person name="Unlu G."/>
            <person name="Saier M.H. Jr."/>
            <person name="Klaenhammer T."/>
            <person name="Richardson P."/>
            <person name="Kozyavkin S."/>
            <person name="Weimer B.C."/>
            <person name="Mills D.A."/>
        </authorList>
    </citation>
    <scope>NUCLEOTIDE SEQUENCE [LARGE SCALE GENOMIC DNA]</scope>
    <source>
        <strain>ATCC 367 / BCRC 12310 / CIP 105137 / JCM 1170 / LMG 11437 / NCIMB 947 / NCTC 947</strain>
    </source>
</reference>
<evidence type="ECO:0000255" key="1">
    <source>
        <dbReference type="HAMAP-Rule" id="MF_00740"/>
    </source>
</evidence>
<accession>Q03Q51</accession>
<protein>
    <recommendedName>
        <fullName evidence="1">Phosphopentomutase</fullName>
        <ecNumber evidence="1">5.4.2.7</ecNumber>
    </recommendedName>
    <alternativeName>
        <fullName evidence="1">Phosphodeoxyribomutase</fullName>
    </alternativeName>
</protein>
<organism>
    <name type="scientific">Levilactobacillus brevis (strain ATCC 367 / BCRC 12310 / CIP 105137 / JCM 1170 / LMG 11437 / NCIMB 947 / NCTC 947)</name>
    <name type="common">Lactobacillus brevis</name>
    <dbReference type="NCBI Taxonomy" id="387344"/>
    <lineage>
        <taxon>Bacteria</taxon>
        <taxon>Bacillati</taxon>
        <taxon>Bacillota</taxon>
        <taxon>Bacilli</taxon>
        <taxon>Lactobacillales</taxon>
        <taxon>Lactobacillaceae</taxon>
        <taxon>Levilactobacillus</taxon>
    </lineage>
</organism>
<keyword id="KW-0963">Cytoplasm</keyword>
<keyword id="KW-0413">Isomerase</keyword>
<keyword id="KW-0464">Manganese</keyword>
<keyword id="KW-0479">Metal-binding</keyword>
<keyword id="KW-1185">Reference proteome</keyword>
<feature type="chain" id="PRO_1000046388" description="Phosphopentomutase">
    <location>
        <begin position="1"/>
        <end position="395"/>
    </location>
</feature>
<feature type="binding site" evidence="1">
    <location>
        <position position="12"/>
    </location>
    <ligand>
        <name>Mn(2+)</name>
        <dbReference type="ChEBI" id="CHEBI:29035"/>
        <label>1</label>
    </ligand>
</feature>
<feature type="binding site" evidence="1">
    <location>
        <position position="289"/>
    </location>
    <ligand>
        <name>Mn(2+)</name>
        <dbReference type="ChEBI" id="CHEBI:29035"/>
        <label>2</label>
    </ligand>
</feature>
<feature type="binding site" evidence="1">
    <location>
        <position position="294"/>
    </location>
    <ligand>
        <name>Mn(2+)</name>
        <dbReference type="ChEBI" id="CHEBI:29035"/>
        <label>2</label>
    </ligand>
</feature>
<feature type="binding site" evidence="1">
    <location>
        <position position="330"/>
    </location>
    <ligand>
        <name>Mn(2+)</name>
        <dbReference type="ChEBI" id="CHEBI:29035"/>
        <label>1</label>
    </ligand>
</feature>
<feature type="binding site" evidence="1">
    <location>
        <position position="331"/>
    </location>
    <ligand>
        <name>Mn(2+)</name>
        <dbReference type="ChEBI" id="CHEBI:29035"/>
        <label>1</label>
    </ligand>
</feature>
<feature type="binding site" evidence="1">
    <location>
        <position position="342"/>
    </location>
    <ligand>
        <name>Mn(2+)</name>
        <dbReference type="ChEBI" id="CHEBI:29035"/>
        <label>2</label>
    </ligand>
</feature>
<sequence>MKFKRVFGLVMDSVGAGAAPDANKFGDEGADTLGHVGHHFAGKLALPNLAKIGLSNLRETPIEGVPVADDPHAYYGKMREISAGKDSMDGHWEMMGLPVRKALSTFPNGFPADIITKLETFSGRKVIGNRPESGTKIIAELGEQQMKTGDLIVYTSGDSVLQIAAHEDVIPLAELYKICEYARSLVNGPEYLVGRIIARPYVGPDADHFTRTANRRDFTLEPTGETDLDRLQAAGVRVVAVGKTNDIFSGHGIDEAYHNESNMDGMDHVDHVMTEDFTGFCFINLVDFDAMYGHRRNPDGFGQALMDFDQRLGTVLANMHDDDLLMITADHGNDPTYTGTDHTREQVPLLVYSPSFKQGGSLGVRSPFADFGATVLDNFGVAGNHEGHSFLAELK</sequence>
<gene>
    <name evidence="1" type="primary">deoB</name>
    <name type="ordered locus">LVIS_1594</name>
</gene>
<comment type="function">
    <text evidence="1">Isomerase that catalyzes the conversion of deoxy-ribose 1-phosphate (dRib-1-P) and ribose 1-phosphate (Rib-1-P) to deoxy-ribose 5-phosphate (dRib-5-P) and ribose 5-phosphate (Rib-5-P), respectively.</text>
</comment>
<comment type="catalytic activity">
    <reaction evidence="1">
        <text>2-deoxy-alpha-D-ribose 1-phosphate = 2-deoxy-D-ribose 5-phosphate</text>
        <dbReference type="Rhea" id="RHEA:27658"/>
        <dbReference type="ChEBI" id="CHEBI:57259"/>
        <dbReference type="ChEBI" id="CHEBI:62877"/>
        <dbReference type="EC" id="5.4.2.7"/>
    </reaction>
</comment>
<comment type="catalytic activity">
    <reaction evidence="1">
        <text>alpha-D-ribose 1-phosphate = D-ribose 5-phosphate</text>
        <dbReference type="Rhea" id="RHEA:18793"/>
        <dbReference type="ChEBI" id="CHEBI:57720"/>
        <dbReference type="ChEBI" id="CHEBI:78346"/>
        <dbReference type="EC" id="5.4.2.7"/>
    </reaction>
</comment>
<comment type="cofactor">
    <cofactor evidence="1">
        <name>Mn(2+)</name>
        <dbReference type="ChEBI" id="CHEBI:29035"/>
    </cofactor>
    <text evidence="1">Binds 2 manganese ions.</text>
</comment>
<comment type="pathway">
    <text evidence="1">Carbohydrate degradation; 2-deoxy-D-ribose 1-phosphate degradation; D-glyceraldehyde 3-phosphate and acetaldehyde from 2-deoxy-alpha-D-ribose 1-phosphate: step 1/2.</text>
</comment>
<comment type="subcellular location">
    <subcellularLocation>
        <location evidence="1">Cytoplasm</location>
    </subcellularLocation>
</comment>
<comment type="similarity">
    <text evidence="1">Belongs to the phosphopentomutase family.</text>
</comment>
<name>DEOB_LEVBA</name>
<dbReference type="EC" id="5.4.2.7" evidence="1"/>
<dbReference type="EMBL" id="CP000416">
    <property type="protein sequence ID" value="ABJ64671.1"/>
    <property type="molecule type" value="Genomic_DNA"/>
</dbReference>
<dbReference type="RefSeq" id="WP_011668297.1">
    <property type="nucleotide sequence ID" value="NC_008497.1"/>
</dbReference>
<dbReference type="SMR" id="Q03Q51"/>
<dbReference type="STRING" id="387344.LVIS_1594"/>
<dbReference type="KEGG" id="lbr:LVIS_1594"/>
<dbReference type="PATRIC" id="fig|387344.15.peg.1508"/>
<dbReference type="eggNOG" id="COG1015">
    <property type="taxonomic scope" value="Bacteria"/>
</dbReference>
<dbReference type="HOGENOM" id="CLU_053861_0_0_9"/>
<dbReference type="UniPathway" id="UPA00002">
    <property type="reaction ID" value="UER00467"/>
</dbReference>
<dbReference type="Proteomes" id="UP000001652">
    <property type="component" value="Chromosome"/>
</dbReference>
<dbReference type="GO" id="GO:0005829">
    <property type="term" value="C:cytosol"/>
    <property type="evidence" value="ECO:0007669"/>
    <property type="project" value="TreeGrafter"/>
</dbReference>
<dbReference type="GO" id="GO:0000287">
    <property type="term" value="F:magnesium ion binding"/>
    <property type="evidence" value="ECO:0007669"/>
    <property type="project" value="InterPro"/>
</dbReference>
<dbReference type="GO" id="GO:0030145">
    <property type="term" value="F:manganese ion binding"/>
    <property type="evidence" value="ECO:0007669"/>
    <property type="project" value="UniProtKB-UniRule"/>
</dbReference>
<dbReference type="GO" id="GO:0008973">
    <property type="term" value="F:phosphopentomutase activity"/>
    <property type="evidence" value="ECO:0007669"/>
    <property type="project" value="UniProtKB-UniRule"/>
</dbReference>
<dbReference type="GO" id="GO:0006018">
    <property type="term" value="P:2-deoxyribose 1-phosphate catabolic process"/>
    <property type="evidence" value="ECO:0007669"/>
    <property type="project" value="UniProtKB-UniRule"/>
</dbReference>
<dbReference type="GO" id="GO:0006015">
    <property type="term" value="P:5-phosphoribose 1-diphosphate biosynthetic process"/>
    <property type="evidence" value="ECO:0007669"/>
    <property type="project" value="UniProtKB-UniPathway"/>
</dbReference>
<dbReference type="GO" id="GO:0043094">
    <property type="term" value="P:metabolic compound salvage"/>
    <property type="evidence" value="ECO:0007669"/>
    <property type="project" value="InterPro"/>
</dbReference>
<dbReference type="GO" id="GO:0009117">
    <property type="term" value="P:nucleotide metabolic process"/>
    <property type="evidence" value="ECO:0007669"/>
    <property type="project" value="InterPro"/>
</dbReference>
<dbReference type="CDD" id="cd16009">
    <property type="entry name" value="PPM"/>
    <property type="match status" value="1"/>
</dbReference>
<dbReference type="FunFam" id="3.30.70.1250:FF:000001">
    <property type="entry name" value="Phosphopentomutase"/>
    <property type="match status" value="1"/>
</dbReference>
<dbReference type="Gene3D" id="3.40.720.10">
    <property type="entry name" value="Alkaline Phosphatase, subunit A"/>
    <property type="match status" value="1"/>
</dbReference>
<dbReference type="Gene3D" id="3.30.70.1250">
    <property type="entry name" value="Phosphopentomutase"/>
    <property type="match status" value="1"/>
</dbReference>
<dbReference type="HAMAP" id="MF_00740">
    <property type="entry name" value="Phosphopentomut"/>
    <property type="match status" value="1"/>
</dbReference>
<dbReference type="InterPro" id="IPR017850">
    <property type="entry name" value="Alkaline_phosphatase_core_sf"/>
</dbReference>
<dbReference type="InterPro" id="IPR010045">
    <property type="entry name" value="DeoB"/>
</dbReference>
<dbReference type="InterPro" id="IPR006124">
    <property type="entry name" value="Metalloenzyme"/>
</dbReference>
<dbReference type="InterPro" id="IPR024052">
    <property type="entry name" value="Phosphopentomutase_DeoB_cap_sf"/>
</dbReference>
<dbReference type="NCBIfam" id="TIGR01696">
    <property type="entry name" value="deoB"/>
    <property type="match status" value="1"/>
</dbReference>
<dbReference type="NCBIfam" id="NF003766">
    <property type="entry name" value="PRK05362.1"/>
    <property type="match status" value="1"/>
</dbReference>
<dbReference type="PANTHER" id="PTHR21110">
    <property type="entry name" value="PHOSPHOPENTOMUTASE"/>
    <property type="match status" value="1"/>
</dbReference>
<dbReference type="PANTHER" id="PTHR21110:SF0">
    <property type="entry name" value="PHOSPHOPENTOMUTASE"/>
    <property type="match status" value="1"/>
</dbReference>
<dbReference type="Pfam" id="PF01676">
    <property type="entry name" value="Metalloenzyme"/>
    <property type="match status" value="1"/>
</dbReference>
<dbReference type="PIRSF" id="PIRSF001491">
    <property type="entry name" value="Ppentomutase"/>
    <property type="match status" value="1"/>
</dbReference>
<dbReference type="SUPFAM" id="SSF53649">
    <property type="entry name" value="Alkaline phosphatase-like"/>
    <property type="match status" value="1"/>
</dbReference>
<dbReference type="SUPFAM" id="SSF143856">
    <property type="entry name" value="DeoB insert domain-like"/>
    <property type="match status" value="1"/>
</dbReference>
<proteinExistence type="inferred from homology"/>